<comment type="subunit">
    <text evidence="1">Part of the 50S ribosomal subunit.</text>
</comment>
<comment type="similarity">
    <text evidence="1">Belongs to the bacterial ribosomal protein bL31 family. Type B subfamily.</text>
</comment>
<dbReference type="EMBL" id="CP001138">
    <property type="protein sequence ID" value="ACH50294.1"/>
    <property type="molecule type" value="Genomic_DNA"/>
</dbReference>
<dbReference type="RefSeq" id="WP_000801415.1">
    <property type="nucleotide sequence ID" value="NC_011149.1"/>
</dbReference>
<dbReference type="SMR" id="B5EXK9"/>
<dbReference type="KEGG" id="sea:SeAg_B0510"/>
<dbReference type="HOGENOM" id="CLU_114306_2_1_6"/>
<dbReference type="Proteomes" id="UP000008819">
    <property type="component" value="Chromosome"/>
</dbReference>
<dbReference type="GO" id="GO:1990904">
    <property type="term" value="C:ribonucleoprotein complex"/>
    <property type="evidence" value="ECO:0007669"/>
    <property type="project" value="UniProtKB-KW"/>
</dbReference>
<dbReference type="GO" id="GO:0005840">
    <property type="term" value="C:ribosome"/>
    <property type="evidence" value="ECO:0007669"/>
    <property type="project" value="UniProtKB-KW"/>
</dbReference>
<dbReference type="GO" id="GO:0003735">
    <property type="term" value="F:structural constituent of ribosome"/>
    <property type="evidence" value="ECO:0007669"/>
    <property type="project" value="InterPro"/>
</dbReference>
<dbReference type="GO" id="GO:0006412">
    <property type="term" value="P:translation"/>
    <property type="evidence" value="ECO:0007669"/>
    <property type="project" value="UniProtKB-UniRule"/>
</dbReference>
<dbReference type="Gene3D" id="4.10.830.30">
    <property type="entry name" value="Ribosomal protein L31"/>
    <property type="match status" value="1"/>
</dbReference>
<dbReference type="HAMAP" id="MF_00502">
    <property type="entry name" value="Ribosomal_bL31_2"/>
    <property type="match status" value="1"/>
</dbReference>
<dbReference type="InterPro" id="IPR034704">
    <property type="entry name" value="Ribosomal_bL28/bL31-like_sf"/>
</dbReference>
<dbReference type="InterPro" id="IPR002150">
    <property type="entry name" value="Ribosomal_bL31"/>
</dbReference>
<dbReference type="InterPro" id="IPR027493">
    <property type="entry name" value="Ribosomal_bL31_B"/>
</dbReference>
<dbReference type="InterPro" id="IPR042105">
    <property type="entry name" value="Ribosomal_bL31_sf"/>
</dbReference>
<dbReference type="NCBIfam" id="TIGR00105">
    <property type="entry name" value="L31"/>
    <property type="match status" value="1"/>
</dbReference>
<dbReference type="NCBIfam" id="NF002462">
    <property type="entry name" value="PRK01678.1"/>
    <property type="match status" value="1"/>
</dbReference>
<dbReference type="PANTHER" id="PTHR33280">
    <property type="entry name" value="50S RIBOSOMAL PROTEIN L31, CHLOROPLASTIC"/>
    <property type="match status" value="1"/>
</dbReference>
<dbReference type="PANTHER" id="PTHR33280:SF1">
    <property type="entry name" value="LARGE RIBOSOMAL SUBUNIT PROTEIN BL31C"/>
    <property type="match status" value="1"/>
</dbReference>
<dbReference type="Pfam" id="PF01197">
    <property type="entry name" value="Ribosomal_L31"/>
    <property type="match status" value="1"/>
</dbReference>
<dbReference type="PRINTS" id="PR01249">
    <property type="entry name" value="RIBOSOMALL31"/>
</dbReference>
<dbReference type="SUPFAM" id="SSF143800">
    <property type="entry name" value="L28p-like"/>
    <property type="match status" value="1"/>
</dbReference>
<sequence>MKPDIHPVYRTVVFHDTSANEYVKVGSTIKTEREIELDGVTYPYVTIDVSSKSHPFYTGRQKTFDSESSAARFQKRFGHFIGAKRG</sequence>
<accession>B5EXK9</accession>
<proteinExistence type="inferred from homology"/>
<reference key="1">
    <citation type="journal article" date="2011" name="J. Bacteriol.">
        <title>Comparative genomics of 28 Salmonella enterica isolates: evidence for CRISPR-mediated adaptive sublineage evolution.</title>
        <authorList>
            <person name="Fricke W.F."/>
            <person name="Mammel M.K."/>
            <person name="McDermott P.F."/>
            <person name="Tartera C."/>
            <person name="White D.G."/>
            <person name="Leclerc J.E."/>
            <person name="Ravel J."/>
            <person name="Cebula T.A."/>
        </authorList>
    </citation>
    <scope>NUCLEOTIDE SEQUENCE [LARGE SCALE GENOMIC DNA]</scope>
    <source>
        <strain>SL483</strain>
    </source>
</reference>
<gene>
    <name evidence="1" type="primary">rpmE2</name>
    <name type="ordered locus">SeAg_B0510</name>
</gene>
<feature type="chain" id="PRO_1000126831" description="Large ribosomal subunit protein bL31B">
    <location>
        <begin position="1"/>
        <end position="86"/>
    </location>
</feature>
<protein>
    <recommendedName>
        <fullName evidence="1">Large ribosomal subunit protein bL31B</fullName>
    </recommendedName>
    <alternativeName>
        <fullName evidence="2">50S ribosomal protein L31 type B</fullName>
    </alternativeName>
</protein>
<name>RL31B_SALA4</name>
<organism>
    <name type="scientific">Salmonella agona (strain SL483)</name>
    <dbReference type="NCBI Taxonomy" id="454166"/>
    <lineage>
        <taxon>Bacteria</taxon>
        <taxon>Pseudomonadati</taxon>
        <taxon>Pseudomonadota</taxon>
        <taxon>Gammaproteobacteria</taxon>
        <taxon>Enterobacterales</taxon>
        <taxon>Enterobacteriaceae</taxon>
        <taxon>Salmonella</taxon>
    </lineage>
</organism>
<keyword id="KW-0687">Ribonucleoprotein</keyword>
<keyword id="KW-0689">Ribosomal protein</keyword>
<evidence type="ECO:0000255" key="1">
    <source>
        <dbReference type="HAMAP-Rule" id="MF_00502"/>
    </source>
</evidence>
<evidence type="ECO:0000305" key="2"/>